<protein>
    <recommendedName>
        <fullName>Transcriptional regulator MraZ</fullName>
    </recommendedName>
</protein>
<name>MRAZ_MYCVP</name>
<proteinExistence type="inferred from homology"/>
<accession>A1TAX7</accession>
<dbReference type="EMBL" id="CP000511">
    <property type="protein sequence ID" value="ABM14327.1"/>
    <property type="molecule type" value="Genomic_DNA"/>
</dbReference>
<dbReference type="RefSeq" id="WP_011780731.1">
    <property type="nucleotide sequence ID" value="NZ_JACKSD010000044.1"/>
</dbReference>
<dbReference type="SMR" id="A1TAX7"/>
<dbReference type="STRING" id="350058.Mvan_3532"/>
<dbReference type="KEGG" id="mva:Mvan_3532"/>
<dbReference type="eggNOG" id="COG2001">
    <property type="taxonomic scope" value="Bacteria"/>
</dbReference>
<dbReference type="HOGENOM" id="CLU_107907_0_5_11"/>
<dbReference type="Proteomes" id="UP000009159">
    <property type="component" value="Chromosome"/>
</dbReference>
<dbReference type="GO" id="GO:0005737">
    <property type="term" value="C:cytoplasm"/>
    <property type="evidence" value="ECO:0007669"/>
    <property type="project" value="UniProtKB-UniRule"/>
</dbReference>
<dbReference type="GO" id="GO:0009295">
    <property type="term" value="C:nucleoid"/>
    <property type="evidence" value="ECO:0007669"/>
    <property type="project" value="UniProtKB-SubCell"/>
</dbReference>
<dbReference type="GO" id="GO:0003700">
    <property type="term" value="F:DNA-binding transcription factor activity"/>
    <property type="evidence" value="ECO:0007669"/>
    <property type="project" value="UniProtKB-UniRule"/>
</dbReference>
<dbReference type="GO" id="GO:0000976">
    <property type="term" value="F:transcription cis-regulatory region binding"/>
    <property type="evidence" value="ECO:0007669"/>
    <property type="project" value="TreeGrafter"/>
</dbReference>
<dbReference type="GO" id="GO:2000143">
    <property type="term" value="P:negative regulation of DNA-templated transcription initiation"/>
    <property type="evidence" value="ECO:0007669"/>
    <property type="project" value="TreeGrafter"/>
</dbReference>
<dbReference type="CDD" id="cd16321">
    <property type="entry name" value="MraZ_C"/>
    <property type="match status" value="1"/>
</dbReference>
<dbReference type="CDD" id="cd16320">
    <property type="entry name" value="MraZ_N"/>
    <property type="match status" value="1"/>
</dbReference>
<dbReference type="Gene3D" id="3.40.1550.20">
    <property type="entry name" value="Transcriptional regulator MraZ domain"/>
    <property type="match status" value="1"/>
</dbReference>
<dbReference type="HAMAP" id="MF_01008">
    <property type="entry name" value="MraZ"/>
    <property type="match status" value="1"/>
</dbReference>
<dbReference type="InterPro" id="IPR003444">
    <property type="entry name" value="MraZ"/>
</dbReference>
<dbReference type="InterPro" id="IPR035644">
    <property type="entry name" value="MraZ_C"/>
</dbReference>
<dbReference type="InterPro" id="IPR020603">
    <property type="entry name" value="MraZ_dom"/>
</dbReference>
<dbReference type="InterPro" id="IPR035642">
    <property type="entry name" value="MraZ_N"/>
</dbReference>
<dbReference type="InterPro" id="IPR038619">
    <property type="entry name" value="MraZ_sf"/>
</dbReference>
<dbReference type="InterPro" id="IPR007159">
    <property type="entry name" value="SpoVT-AbrB_dom"/>
</dbReference>
<dbReference type="InterPro" id="IPR037914">
    <property type="entry name" value="SpoVT-AbrB_sf"/>
</dbReference>
<dbReference type="PANTHER" id="PTHR34701">
    <property type="entry name" value="TRANSCRIPTIONAL REGULATOR MRAZ"/>
    <property type="match status" value="1"/>
</dbReference>
<dbReference type="PANTHER" id="PTHR34701:SF1">
    <property type="entry name" value="TRANSCRIPTIONAL REGULATOR MRAZ"/>
    <property type="match status" value="1"/>
</dbReference>
<dbReference type="Pfam" id="PF02381">
    <property type="entry name" value="MraZ"/>
    <property type="match status" value="2"/>
</dbReference>
<dbReference type="SUPFAM" id="SSF89447">
    <property type="entry name" value="AbrB/MazE/MraZ-like"/>
    <property type="match status" value="1"/>
</dbReference>
<dbReference type="PROSITE" id="PS51740">
    <property type="entry name" value="SPOVT_ABRB"/>
    <property type="match status" value="2"/>
</dbReference>
<feature type="chain" id="PRO_1000062904" description="Transcriptional regulator MraZ">
    <location>
        <begin position="1"/>
        <end position="144"/>
    </location>
</feature>
<feature type="domain" description="SpoVT-AbrB 1" evidence="2">
    <location>
        <begin position="5"/>
        <end position="47"/>
    </location>
</feature>
<feature type="domain" description="SpoVT-AbrB 2" evidence="2">
    <location>
        <begin position="77"/>
        <end position="120"/>
    </location>
</feature>
<organism>
    <name type="scientific">Mycolicibacterium vanbaalenii (strain DSM 7251 / JCM 13017 / BCRC 16820 / KCTC 9966 / NRRL B-24157 / PYR-1)</name>
    <name type="common">Mycobacterium vanbaalenii</name>
    <dbReference type="NCBI Taxonomy" id="350058"/>
    <lineage>
        <taxon>Bacteria</taxon>
        <taxon>Bacillati</taxon>
        <taxon>Actinomycetota</taxon>
        <taxon>Actinomycetes</taxon>
        <taxon>Mycobacteriales</taxon>
        <taxon>Mycobacteriaceae</taxon>
        <taxon>Mycolicibacterium</taxon>
    </lineage>
</organism>
<gene>
    <name evidence="1" type="primary">mraZ</name>
    <name type="ordered locus">Mvan_3532</name>
</gene>
<keyword id="KW-0963">Cytoplasm</keyword>
<keyword id="KW-0238">DNA-binding</keyword>
<keyword id="KW-0677">Repeat</keyword>
<keyword id="KW-0804">Transcription</keyword>
<keyword id="KW-0805">Transcription regulation</keyword>
<sequence length="144" mass="16077">MFFGTYTPKLDDKGRLTLPAKFRDALAGGLMVTKSQDHSLAVHPRAEFEEMIAEISAKAKRGNPQARAYLRNLAASTDEQYPDAQGRITLSAEHRRYANLTKECVVTGSIGFLEIWDAQAWQDYQELHEENFSAASDEALGDIL</sequence>
<reference key="1">
    <citation type="submission" date="2006-12" db="EMBL/GenBank/DDBJ databases">
        <title>Complete sequence of Mycobacterium vanbaalenii PYR-1.</title>
        <authorList>
            <consortium name="US DOE Joint Genome Institute"/>
            <person name="Copeland A."/>
            <person name="Lucas S."/>
            <person name="Lapidus A."/>
            <person name="Barry K."/>
            <person name="Detter J.C."/>
            <person name="Glavina del Rio T."/>
            <person name="Hammon N."/>
            <person name="Israni S."/>
            <person name="Dalin E."/>
            <person name="Tice H."/>
            <person name="Pitluck S."/>
            <person name="Singan V."/>
            <person name="Schmutz J."/>
            <person name="Larimer F."/>
            <person name="Land M."/>
            <person name="Hauser L."/>
            <person name="Kyrpides N."/>
            <person name="Anderson I.J."/>
            <person name="Miller C."/>
            <person name="Richardson P."/>
        </authorList>
    </citation>
    <scope>NUCLEOTIDE SEQUENCE [LARGE SCALE GENOMIC DNA]</scope>
    <source>
        <strain>DSM 7251 / JCM 13017 / BCRC 16820 / KCTC 9966 / NRRL B-24157 / PYR-1</strain>
    </source>
</reference>
<comment type="subunit">
    <text evidence="1">Forms oligomers.</text>
</comment>
<comment type="subcellular location">
    <subcellularLocation>
        <location evidence="1">Cytoplasm</location>
        <location evidence="1">Nucleoid</location>
    </subcellularLocation>
</comment>
<comment type="similarity">
    <text evidence="1">Belongs to the MraZ family.</text>
</comment>
<evidence type="ECO:0000255" key="1">
    <source>
        <dbReference type="HAMAP-Rule" id="MF_01008"/>
    </source>
</evidence>
<evidence type="ECO:0000255" key="2">
    <source>
        <dbReference type="PROSITE-ProRule" id="PRU01076"/>
    </source>
</evidence>